<dbReference type="GO" id="GO:0005576">
    <property type="term" value="C:extracellular region"/>
    <property type="evidence" value="ECO:0007669"/>
    <property type="project" value="UniProtKB-SubCell"/>
</dbReference>
<dbReference type="GO" id="GO:0031769">
    <property type="term" value="F:glucagon receptor binding"/>
    <property type="evidence" value="ECO:0007669"/>
    <property type="project" value="TreeGrafter"/>
</dbReference>
<dbReference type="GO" id="GO:0005179">
    <property type="term" value="F:hormone activity"/>
    <property type="evidence" value="ECO:0007669"/>
    <property type="project" value="UniProtKB-KW"/>
</dbReference>
<dbReference type="GO" id="GO:0042594">
    <property type="term" value="P:response to starvation"/>
    <property type="evidence" value="ECO:0007669"/>
    <property type="project" value="TreeGrafter"/>
</dbReference>
<dbReference type="Gene3D" id="6.10.250.590">
    <property type="match status" value="2"/>
</dbReference>
<dbReference type="InterPro" id="IPR015550">
    <property type="entry name" value="Glucagon"/>
</dbReference>
<dbReference type="InterPro" id="IPR000532">
    <property type="entry name" value="Glucagon_GIP_secretin_VIP"/>
</dbReference>
<dbReference type="PANTHER" id="PTHR11418">
    <property type="entry name" value="GLUCAGON"/>
    <property type="match status" value="1"/>
</dbReference>
<dbReference type="PANTHER" id="PTHR11418:SF0">
    <property type="entry name" value="PRO-GLUCAGON"/>
    <property type="match status" value="1"/>
</dbReference>
<dbReference type="Pfam" id="PF00123">
    <property type="entry name" value="Hormone_2"/>
    <property type="match status" value="2"/>
</dbReference>
<dbReference type="PRINTS" id="PR00275">
    <property type="entry name" value="GLUCAGON"/>
</dbReference>
<dbReference type="SMART" id="SM00070">
    <property type="entry name" value="GLUCA"/>
    <property type="match status" value="2"/>
</dbReference>
<dbReference type="PROSITE" id="PS00260">
    <property type="entry name" value="GLUCAGON"/>
    <property type="match status" value="2"/>
</dbReference>
<proteinExistence type="evidence at protein level"/>
<protein>
    <recommendedName>
        <fullName>Pro-glucagon</fullName>
    </recommendedName>
    <component>
        <recommendedName>
            <fullName>Glucagon</fullName>
        </recommendedName>
    </component>
    <component>
        <recommendedName>
            <fullName>Glucagon-like peptide</fullName>
        </recommendedName>
    </component>
</protein>
<gene>
    <name type="primary">gcg</name>
</gene>
<feature type="peptide" id="PRO_0000011381" description="Glucagon" evidence="2">
    <location>
        <begin position="1"/>
        <end position="29"/>
    </location>
</feature>
<feature type="peptide" id="PRO_0000011382" description="Glucagon-like peptide" evidence="2">
    <location>
        <begin position="38"/>
        <end position="71"/>
    </location>
</feature>
<feature type="non-terminal residue">
    <location>
        <position position="1"/>
    </location>
</feature>
<feature type="non-terminal residue">
    <location>
        <position position="71"/>
    </location>
</feature>
<sequence length="71" mass="8155">HSEGTFSNDYSKYLETQRAQDFVQWLMNSXXXXXXXXHADGTYTSDVSAYLQDQAAKDFITWLKSGQPKQE</sequence>
<organism>
    <name type="scientific">Piaractus mesopotamicus</name>
    <name type="common">Small-scaled pacu</name>
    <name type="synonym">Myletes mesopotamicus</name>
    <dbReference type="NCBI Taxonomy" id="42528"/>
    <lineage>
        <taxon>Eukaryota</taxon>
        <taxon>Metazoa</taxon>
        <taxon>Chordata</taxon>
        <taxon>Craniata</taxon>
        <taxon>Vertebrata</taxon>
        <taxon>Euteleostomi</taxon>
        <taxon>Actinopterygii</taxon>
        <taxon>Neopterygii</taxon>
        <taxon>Teleostei</taxon>
        <taxon>Ostariophysi</taxon>
        <taxon>Characiformes</taxon>
        <taxon>Characoidei</taxon>
        <taxon>Piaractus</taxon>
    </lineage>
</organism>
<accession>P81880</accession>
<evidence type="ECO:0000250" key="1">
    <source>
        <dbReference type="UniProtKB" id="P01275"/>
    </source>
</evidence>
<evidence type="ECO:0000269" key="2">
    <source>
    </source>
</evidence>
<evidence type="ECO:0000305" key="3"/>
<name>GLUC_PIAME</name>
<keyword id="KW-0903">Direct protein sequencing</keyword>
<keyword id="KW-0372">Hormone</keyword>
<keyword id="KW-0964">Secreted</keyword>
<reference key="1">
    <citation type="journal article" date="1999" name="Comp. Biochem. Physiol.">
        <title>Purification and characterization of insulin and peptides derived from proglucagon and prosomatostatin from the fruit-eating fish, the pacu Piaractus mesopotamicus.</title>
        <authorList>
            <person name="de Lima J.A."/>
            <person name="Oliveira B."/>
            <person name="Conlon J.M."/>
        </authorList>
    </citation>
    <scope>PROTEIN SEQUENCE</scope>
    <source>
        <tissue>Pancreas</tissue>
    </source>
</reference>
<comment type="function">
    <molecule>Glucagon</molecule>
    <text evidence="1">Plays a key role in glucose metabolism and homeostasis. Regulates blood glucose by increasing gluconeogenesis and decreasing glycolysis.</text>
</comment>
<comment type="subcellular location">
    <subcellularLocation>
        <location>Secreted</location>
    </subcellularLocation>
</comment>
<comment type="induction">
    <text>Produced in the A cells of the islets of Langerhans in response to a drop in blood sugar concentration.</text>
</comment>
<comment type="miscellaneous">
    <text>X's in the sequence were included by homology with other fish sequences.</text>
</comment>
<comment type="similarity">
    <text evidence="3">Belongs to the glucagon family.</text>
</comment>